<proteinExistence type="inferred from homology"/>
<protein>
    <recommendedName>
        <fullName evidence="1">Phosphoglucosamine mutase</fullName>
        <ecNumber evidence="1">5.4.2.10</ecNumber>
    </recommendedName>
</protein>
<gene>
    <name evidence="1" type="primary">glmM</name>
    <name type="ordered locus">NE0530</name>
</gene>
<name>GLMM_NITEU</name>
<sequence length="458" mass="49702">MKKKYFGTDGIRGKVGDFPITPDFFLRLGYAVGKVLLASDRQLAADKRPTVLIGKDTRISGYMLESALEAGFSAAGVDVLLSGPLPTPAVAYLVRALRIQAGAVISASHNPFDDNGIKFFSSAGSKLPDSMELQIEAELDQPMKTTPSIKLGRVQRLRDAAGRYIEFCKSTFPNQLDLRGLRIVVDCANGADYHIAGHVMHELGADVITTHASPDGFNINYECGATHIETLQGSILQHKADIGIAVDGDGDRVLMVSREGVLYDGDSLAYIIAKHRQQLGELQGGVAGTLMTNLAVEQAFERLGIPFARANVGDRYVSELLQQNDWYLGAENSGHIICRDKHTTGDGIISALQVLYALRDTGLTLADFMRDVPFFPQRLINVKVSGNFDFRSNPAVAACKNEAEQALGNDGRILLRASGTEPLIRVMVEGKVLQQTDYWAEKIAETIRQQAASSMTGS</sequence>
<organism>
    <name type="scientific">Nitrosomonas europaea (strain ATCC 19718 / CIP 103999 / KCTC 2705 / NBRC 14298)</name>
    <dbReference type="NCBI Taxonomy" id="228410"/>
    <lineage>
        <taxon>Bacteria</taxon>
        <taxon>Pseudomonadati</taxon>
        <taxon>Pseudomonadota</taxon>
        <taxon>Betaproteobacteria</taxon>
        <taxon>Nitrosomonadales</taxon>
        <taxon>Nitrosomonadaceae</taxon>
        <taxon>Nitrosomonas</taxon>
    </lineage>
</organism>
<reference key="1">
    <citation type="journal article" date="2003" name="J. Bacteriol.">
        <title>Complete genome sequence of the ammonia-oxidizing bacterium and obligate chemolithoautotroph Nitrosomonas europaea.</title>
        <authorList>
            <person name="Chain P."/>
            <person name="Lamerdin J.E."/>
            <person name="Larimer F.W."/>
            <person name="Regala W."/>
            <person name="Lao V."/>
            <person name="Land M.L."/>
            <person name="Hauser L."/>
            <person name="Hooper A.B."/>
            <person name="Klotz M.G."/>
            <person name="Norton J."/>
            <person name="Sayavedra-Soto L.A."/>
            <person name="Arciero D.M."/>
            <person name="Hommes N.G."/>
            <person name="Whittaker M.M."/>
            <person name="Arp D.J."/>
        </authorList>
    </citation>
    <scope>NUCLEOTIDE SEQUENCE [LARGE SCALE GENOMIC DNA]</scope>
    <source>
        <strain>ATCC 19718 / CIP 103999 / KCTC 2705 / NBRC 14298</strain>
    </source>
</reference>
<accession>Q82WX6</accession>
<evidence type="ECO:0000255" key="1">
    <source>
        <dbReference type="HAMAP-Rule" id="MF_01554"/>
    </source>
</evidence>
<keyword id="KW-0413">Isomerase</keyword>
<keyword id="KW-0460">Magnesium</keyword>
<keyword id="KW-0479">Metal-binding</keyword>
<keyword id="KW-0597">Phosphoprotein</keyword>
<keyword id="KW-1185">Reference proteome</keyword>
<feature type="chain" id="PRO_0000147925" description="Phosphoglucosamine mutase">
    <location>
        <begin position="1"/>
        <end position="458"/>
    </location>
</feature>
<feature type="active site" description="Phosphoserine intermediate" evidence="1">
    <location>
        <position position="108"/>
    </location>
</feature>
<feature type="binding site" description="via phosphate group" evidence="1">
    <location>
        <position position="108"/>
    </location>
    <ligand>
        <name>Mg(2+)</name>
        <dbReference type="ChEBI" id="CHEBI:18420"/>
    </ligand>
</feature>
<feature type="binding site" evidence="1">
    <location>
        <position position="247"/>
    </location>
    <ligand>
        <name>Mg(2+)</name>
        <dbReference type="ChEBI" id="CHEBI:18420"/>
    </ligand>
</feature>
<feature type="binding site" evidence="1">
    <location>
        <position position="249"/>
    </location>
    <ligand>
        <name>Mg(2+)</name>
        <dbReference type="ChEBI" id="CHEBI:18420"/>
    </ligand>
</feature>
<feature type="binding site" evidence="1">
    <location>
        <position position="251"/>
    </location>
    <ligand>
        <name>Mg(2+)</name>
        <dbReference type="ChEBI" id="CHEBI:18420"/>
    </ligand>
</feature>
<feature type="modified residue" description="Phosphoserine" evidence="1">
    <location>
        <position position="108"/>
    </location>
</feature>
<dbReference type="EC" id="5.4.2.10" evidence="1"/>
<dbReference type="EMBL" id="AL954747">
    <property type="protein sequence ID" value="CAD84441.1"/>
    <property type="molecule type" value="Genomic_DNA"/>
</dbReference>
<dbReference type="RefSeq" id="WP_011111160.1">
    <property type="nucleotide sequence ID" value="NC_004757.1"/>
</dbReference>
<dbReference type="SMR" id="Q82WX6"/>
<dbReference type="STRING" id="228410.NE0530"/>
<dbReference type="DNASU" id="1081469"/>
<dbReference type="GeneID" id="87103733"/>
<dbReference type="KEGG" id="neu:NE0530"/>
<dbReference type="eggNOG" id="COG1109">
    <property type="taxonomic scope" value="Bacteria"/>
</dbReference>
<dbReference type="HOGENOM" id="CLU_016950_7_0_4"/>
<dbReference type="OrthoDB" id="9803322at2"/>
<dbReference type="PhylomeDB" id="Q82WX6"/>
<dbReference type="Proteomes" id="UP000001416">
    <property type="component" value="Chromosome"/>
</dbReference>
<dbReference type="GO" id="GO:0005829">
    <property type="term" value="C:cytosol"/>
    <property type="evidence" value="ECO:0007669"/>
    <property type="project" value="TreeGrafter"/>
</dbReference>
<dbReference type="GO" id="GO:0000287">
    <property type="term" value="F:magnesium ion binding"/>
    <property type="evidence" value="ECO:0007669"/>
    <property type="project" value="UniProtKB-UniRule"/>
</dbReference>
<dbReference type="GO" id="GO:0008966">
    <property type="term" value="F:phosphoglucosamine mutase activity"/>
    <property type="evidence" value="ECO:0007669"/>
    <property type="project" value="UniProtKB-UniRule"/>
</dbReference>
<dbReference type="GO" id="GO:0004615">
    <property type="term" value="F:phosphomannomutase activity"/>
    <property type="evidence" value="ECO:0007669"/>
    <property type="project" value="TreeGrafter"/>
</dbReference>
<dbReference type="GO" id="GO:0005975">
    <property type="term" value="P:carbohydrate metabolic process"/>
    <property type="evidence" value="ECO:0007669"/>
    <property type="project" value="InterPro"/>
</dbReference>
<dbReference type="GO" id="GO:0009252">
    <property type="term" value="P:peptidoglycan biosynthetic process"/>
    <property type="evidence" value="ECO:0007669"/>
    <property type="project" value="TreeGrafter"/>
</dbReference>
<dbReference type="GO" id="GO:0006048">
    <property type="term" value="P:UDP-N-acetylglucosamine biosynthetic process"/>
    <property type="evidence" value="ECO:0007669"/>
    <property type="project" value="TreeGrafter"/>
</dbReference>
<dbReference type="CDD" id="cd05802">
    <property type="entry name" value="GlmM"/>
    <property type="match status" value="1"/>
</dbReference>
<dbReference type="FunFam" id="3.30.310.50:FF:000001">
    <property type="entry name" value="Phosphoglucosamine mutase"/>
    <property type="match status" value="1"/>
</dbReference>
<dbReference type="FunFam" id="3.40.120.10:FF:000001">
    <property type="entry name" value="Phosphoglucosamine mutase"/>
    <property type="match status" value="1"/>
</dbReference>
<dbReference type="FunFam" id="3.40.120.10:FF:000003">
    <property type="entry name" value="Phosphoglucosamine mutase"/>
    <property type="match status" value="1"/>
</dbReference>
<dbReference type="Gene3D" id="3.40.120.10">
    <property type="entry name" value="Alpha-D-Glucose-1,6-Bisphosphate, subunit A, domain 3"/>
    <property type="match status" value="3"/>
</dbReference>
<dbReference type="Gene3D" id="3.30.310.50">
    <property type="entry name" value="Alpha-D-phosphohexomutase, C-terminal domain"/>
    <property type="match status" value="1"/>
</dbReference>
<dbReference type="HAMAP" id="MF_01554_B">
    <property type="entry name" value="GlmM_B"/>
    <property type="match status" value="1"/>
</dbReference>
<dbReference type="InterPro" id="IPR005844">
    <property type="entry name" value="A-D-PHexomutase_a/b/a-I"/>
</dbReference>
<dbReference type="InterPro" id="IPR016055">
    <property type="entry name" value="A-D-PHexomutase_a/b/a-I/II/III"/>
</dbReference>
<dbReference type="InterPro" id="IPR005845">
    <property type="entry name" value="A-D-PHexomutase_a/b/a-II"/>
</dbReference>
<dbReference type="InterPro" id="IPR005846">
    <property type="entry name" value="A-D-PHexomutase_a/b/a-III"/>
</dbReference>
<dbReference type="InterPro" id="IPR005843">
    <property type="entry name" value="A-D-PHexomutase_C"/>
</dbReference>
<dbReference type="InterPro" id="IPR036900">
    <property type="entry name" value="A-D-PHexomutase_C_sf"/>
</dbReference>
<dbReference type="InterPro" id="IPR005841">
    <property type="entry name" value="Alpha-D-phosphohexomutase_SF"/>
</dbReference>
<dbReference type="InterPro" id="IPR006352">
    <property type="entry name" value="GlmM_bact"/>
</dbReference>
<dbReference type="InterPro" id="IPR050060">
    <property type="entry name" value="Phosphoglucosamine_mutase"/>
</dbReference>
<dbReference type="NCBIfam" id="TIGR01455">
    <property type="entry name" value="glmM"/>
    <property type="match status" value="1"/>
</dbReference>
<dbReference type="NCBIfam" id="NF008139">
    <property type="entry name" value="PRK10887.1"/>
    <property type="match status" value="1"/>
</dbReference>
<dbReference type="PANTHER" id="PTHR42946:SF1">
    <property type="entry name" value="PHOSPHOGLUCOMUTASE (ALPHA-D-GLUCOSE-1,6-BISPHOSPHATE-DEPENDENT)"/>
    <property type="match status" value="1"/>
</dbReference>
<dbReference type="PANTHER" id="PTHR42946">
    <property type="entry name" value="PHOSPHOHEXOSE MUTASE"/>
    <property type="match status" value="1"/>
</dbReference>
<dbReference type="Pfam" id="PF02878">
    <property type="entry name" value="PGM_PMM_I"/>
    <property type="match status" value="1"/>
</dbReference>
<dbReference type="Pfam" id="PF02879">
    <property type="entry name" value="PGM_PMM_II"/>
    <property type="match status" value="1"/>
</dbReference>
<dbReference type="Pfam" id="PF02880">
    <property type="entry name" value="PGM_PMM_III"/>
    <property type="match status" value="1"/>
</dbReference>
<dbReference type="Pfam" id="PF00408">
    <property type="entry name" value="PGM_PMM_IV"/>
    <property type="match status" value="1"/>
</dbReference>
<dbReference type="PRINTS" id="PR00509">
    <property type="entry name" value="PGMPMM"/>
</dbReference>
<dbReference type="SUPFAM" id="SSF55957">
    <property type="entry name" value="Phosphoglucomutase, C-terminal domain"/>
    <property type="match status" value="1"/>
</dbReference>
<dbReference type="SUPFAM" id="SSF53738">
    <property type="entry name" value="Phosphoglucomutase, first 3 domains"/>
    <property type="match status" value="3"/>
</dbReference>
<comment type="function">
    <text evidence="1">Catalyzes the conversion of glucosamine-6-phosphate to glucosamine-1-phosphate.</text>
</comment>
<comment type="catalytic activity">
    <reaction evidence="1">
        <text>alpha-D-glucosamine 1-phosphate = D-glucosamine 6-phosphate</text>
        <dbReference type="Rhea" id="RHEA:23424"/>
        <dbReference type="ChEBI" id="CHEBI:58516"/>
        <dbReference type="ChEBI" id="CHEBI:58725"/>
        <dbReference type="EC" id="5.4.2.10"/>
    </reaction>
</comment>
<comment type="cofactor">
    <cofactor evidence="1">
        <name>Mg(2+)</name>
        <dbReference type="ChEBI" id="CHEBI:18420"/>
    </cofactor>
    <text evidence="1">Binds 1 Mg(2+) ion per subunit.</text>
</comment>
<comment type="PTM">
    <text evidence="1">Activated by phosphorylation.</text>
</comment>
<comment type="similarity">
    <text evidence="1">Belongs to the phosphohexose mutase family.</text>
</comment>